<evidence type="ECO:0000250" key="1"/>
<evidence type="ECO:0000255" key="2"/>
<evidence type="ECO:0000305" key="3"/>
<sequence>MSAVAYELLSTTAVISTVFQFLSGAMICRKYIQKKSTGDSSGVPFICGFLSCSFWLRYGVLTEEQSIVLVNIIGSTLFLIYTLIYYVFTVNKRAFVRQFAFVLAVLIAVVVVYTNRLADQRDEMIRITGIFCCIVTVCFFAAPLATLLHVIRAKNSESLPLPLIATSFLVSLQWLIYGILISDSFIQIPNFLGCLLSMLQLSLFVVYPPRSYSGQGYKLVEQAVPF</sequence>
<gene>
    <name type="primary">slv</name>
    <name type="ORF">GA21278</name>
</gene>
<accession>Q290X1</accession>
<feature type="chain" id="PRO_0000345123" description="Sugar transporter SWEET1">
    <location>
        <begin position="1"/>
        <end position="226"/>
    </location>
</feature>
<feature type="transmembrane region" description="Helical; Name=1" evidence="2">
    <location>
        <begin position="8"/>
        <end position="28"/>
    </location>
</feature>
<feature type="transmembrane region" description="Helical; Name=2" evidence="2">
    <location>
        <begin position="42"/>
        <end position="62"/>
    </location>
</feature>
<feature type="transmembrane region" description="Helical; Name=3" evidence="2">
    <location>
        <begin position="67"/>
        <end position="87"/>
    </location>
</feature>
<feature type="transmembrane region" description="Helical; Name=4" evidence="2">
    <location>
        <begin position="94"/>
        <end position="114"/>
    </location>
</feature>
<feature type="transmembrane region" description="Helical; Name=5" evidence="2">
    <location>
        <begin position="127"/>
        <end position="147"/>
    </location>
</feature>
<feature type="transmembrane region" description="Helical; Name=6" evidence="2">
    <location>
        <begin position="161"/>
        <end position="181"/>
    </location>
</feature>
<feature type="transmembrane region" description="Helical; Name=7" evidence="2">
    <location>
        <begin position="185"/>
        <end position="205"/>
    </location>
</feature>
<feature type="domain" description="MtN3/slv 1">
    <location>
        <begin position="8"/>
        <end position="92"/>
    </location>
</feature>
<feature type="domain" description="MtN3/slv 2">
    <location>
        <begin position="129"/>
        <end position="210"/>
    </location>
</feature>
<proteinExistence type="inferred from homology"/>
<reference key="1">
    <citation type="journal article" date="2005" name="Genome Res.">
        <title>Comparative genome sequencing of Drosophila pseudoobscura: chromosomal, gene, and cis-element evolution.</title>
        <authorList>
            <person name="Richards S."/>
            <person name="Liu Y."/>
            <person name="Bettencourt B.R."/>
            <person name="Hradecky P."/>
            <person name="Letovsky S."/>
            <person name="Nielsen R."/>
            <person name="Thornton K."/>
            <person name="Hubisz M.J."/>
            <person name="Chen R."/>
            <person name="Meisel R.P."/>
            <person name="Couronne O."/>
            <person name="Hua S."/>
            <person name="Smith M.A."/>
            <person name="Zhang P."/>
            <person name="Liu J."/>
            <person name="Bussemaker H.J."/>
            <person name="van Batenburg M.F."/>
            <person name="Howells S.L."/>
            <person name="Scherer S.E."/>
            <person name="Sodergren E."/>
            <person name="Matthews B.B."/>
            <person name="Crosby M.A."/>
            <person name="Schroeder A.J."/>
            <person name="Ortiz-Barrientos D."/>
            <person name="Rives C.M."/>
            <person name="Metzker M.L."/>
            <person name="Muzny D.M."/>
            <person name="Scott G."/>
            <person name="Steffen D."/>
            <person name="Wheeler D.A."/>
            <person name="Worley K.C."/>
            <person name="Havlak P."/>
            <person name="Durbin K.J."/>
            <person name="Egan A."/>
            <person name="Gill R."/>
            <person name="Hume J."/>
            <person name="Morgan M.B."/>
            <person name="Miner G."/>
            <person name="Hamilton C."/>
            <person name="Huang Y."/>
            <person name="Waldron L."/>
            <person name="Verduzco D."/>
            <person name="Clerc-Blankenburg K.P."/>
            <person name="Dubchak I."/>
            <person name="Noor M.A.F."/>
            <person name="Anderson W."/>
            <person name="White K.P."/>
            <person name="Clark A.G."/>
            <person name="Schaeffer S.W."/>
            <person name="Gelbart W.M."/>
            <person name="Weinstock G.M."/>
            <person name="Gibbs R.A."/>
        </authorList>
    </citation>
    <scope>NUCLEOTIDE SEQUENCE [LARGE SCALE GENOMIC DNA]</scope>
    <source>
        <strain>MV2-25 / Tucson 14011-0121.94</strain>
    </source>
</reference>
<protein>
    <recommendedName>
        <fullName>Sugar transporter SWEET1</fullName>
    </recommendedName>
    <alternativeName>
        <fullName>Protein saliva</fullName>
    </alternativeName>
</protein>
<dbReference type="EMBL" id="CM000071">
    <property type="protein sequence ID" value="EAL25241.1"/>
    <property type="molecule type" value="Genomic_DNA"/>
</dbReference>
<dbReference type="RefSeq" id="XP_001360666.1">
    <property type="nucleotide sequence ID" value="XM_001360629.3"/>
</dbReference>
<dbReference type="SMR" id="Q290X1"/>
<dbReference type="FunCoup" id="Q290X1">
    <property type="interactions" value="288"/>
</dbReference>
<dbReference type="EnsemblMetazoa" id="FBtr0278311">
    <property type="protein sequence ID" value="FBpp0276749"/>
    <property type="gene ID" value="FBgn0081266"/>
</dbReference>
<dbReference type="GeneID" id="4804038"/>
<dbReference type="KEGG" id="dpo:4804038"/>
<dbReference type="CTD" id="35773"/>
<dbReference type="eggNOG" id="KOG1623">
    <property type="taxonomic scope" value="Eukaryota"/>
</dbReference>
<dbReference type="HOGENOM" id="CLU_048643_3_3_1"/>
<dbReference type="InParanoid" id="Q290X1"/>
<dbReference type="OMA" id="CSLWLRY"/>
<dbReference type="PhylomeDB" id="Q290X1"/>
<dbReference type="ChiTaRS" id="svr">
    <property type="organism name" value="fly"/>
</dbReference>
<dbReference type="Proteomes" id="UP000001819">
    <property type="component" value="Chromosome 3"/>
</dbReference>
<dbReference type="Bgee" id="FBgn0081266">
    <property type="expression patterns" value="Expressed in male reproductive system and 2 other cell types or tissues"/>
</dbReference>
<dbReference type="GO" id="GO:0000139">
    <property type="term" value="C:Golgi membrane"/>
    <property type="evidence" value="ECO:0007669"/>
    <property type="project" value="UniProtKB-SubCell"/>
</dbReference>
<dbReference type="GO" id="GO:0005886">
    <property type="term" value="C:plasma membrane"/>
    <property type="evidence" value="ECO:0007669"/>
    <property type="project" value="UniProtKB-SubCell"/>
</dbReference>
<dbReference type="GO" id="GO:0051119">
    <property type="term" value="F:sugar transmembrane transporter activity"/>
    <property type="evidence" value="ECO:0000250"/>
    <property type="project" value="UniProtKB"/>
</dbReference>
<dbReference type="GO" id="GO:0007431">
    <property type="term" value="P:salivary gland development"/>
    <property type="evidence" value="ECO:0000250"/>
    <property type="project" value="UniProtKB"/>
</dbReference>
<dbReference type="FunFam" id="1.20.1280.290:FF:000004">
    <property type="entry name" value="Sugar transporter SWEET"/>
    <property type="match status" value="1"/>
</dbReference>
<dbReference type="FunFam" id="1.20.1280.290:FF:000010">
    <property type="entry name" value="Sugar transporter SWEET"/>
    <property type="match status" value="1"/>
</dbReference>
<dbReference type="Gene3D" id="1.20.1280.290">
    <property type="match status" value="2"/>
</dbReference>
<dbReference type="InterPro" id="IPR047664">
    <property type="entry name" value="SWEET"/>
</dbReference>
<dbReference type="InterPro" id="IPR004316">
    <property type="entry name" value="SWEET_rpt"/>
</dbReference>
<dbReference type="PANTHER" id="PTHR10791">
    <property type="entry name" value="RAG1-ACTIVATING PROTEIN 1"/>
    <property type="match status" value="1"/>
</dbReference>
<dbReference type="PANTHER" id="PTHR10791:SF112">
    <property type="entry name" value="SUGAR TRANSPORTER SWEET1"/>
    <property type="match status" value="1"/>
</dbReference>
<dbReference type="Pfam" id="PF03083">
    <property type="entry name" value="MtN3_slv"/>
    <property type="match status" value="2"/>
</dbReference>
<organism>
    <name type="scientific">Drosophila pseudoobscura pseudoobscura</name>
    <name type="common">Fruit fly</name>
    <dbReference type="NCBI Taxonomy" id="46245"/>
    <lineage>
        <taxon>Eukaryota</taxon>
        <taxon>Metazoa</taxon>
        <taxon>Ecdysozoa</taxon>
        <taxon>Arthropoda</taxon>
        <taxon>Hexapoda</taxon>
        <taxon>Insecta</taxon>
        <taxon>Pterygota</taxon>
        <taxon>Neoptera</taxon>
        <taxon>Endopterygota</taxon>
        <taxon>Diptera</taxon>
        <taxon>Brachycera</taxon>
        <taxon>Muscomorpha</taxon>
        <taxon>Ephydroidea</taxon>
        <taxon>Drosophilidae</taxon>
        <taxon>Drosophila</taxon>
        <taxon>Sophophora</taxon>
    </lineage>
</organism>
<keyword id="KW-1003">Cell membrane</keyword>
<keyword id="KW-0333">Golgi apparatus</keyword>
<keyword id="KW-0472">Membrane</keyword>
<keyword id="KW-1185">Reference proteome</keyword>
<keyword id="KW-0677">Repeat</keyword>
<keyword id="KW-0762">Sugar transport</keyword>
<keyword id="KW-0812">Transmembrane</keyword>
<keyword id="KW-1133">Transmembrane helix</keyword>
<keyword id="KW-0813">Transport</keyword>
<comment type="function">
    <text evidence="1">Mediates both low-affinity uptake and efflux of sugar across the membrane.</text>
</comment>
<comment type="subcellular location">
    <subcellularLocation>
        <location evidence="1">Golgi apparatus membrane</location>
        <topology evidence="1">Multi-pass membrane protein</topology>
    </subcellularLocation>
    <subcellularLocation>
        <location evidence="1">Cell membrane</location>
        <topology evidence="1">Multi-pass membrane protein</topology>
    </subcellularLocation>
</comment>
<comment type="similarity">
    <text evidence="3">Belongs to the SWEET sugar transporter family.</text>
</comment>
<name>SWET1_DROPS</name>